<keyword id="KW-0029">Amino-acid transport</keyword>
<keyword id="KW-1003">Cell membrane</keyword>
<keyword id="KW-0868">Chloride</keyword>
<keyword id="KW-0325">Glycoprotein</keyword>
<keyword id="KW-0472">Membrane</keyword>
<keyword id="KW-0479">Metal-binding</keyword>
<keyword id="KW-0597">Phosphoprotein</keyword>
<keyword id="KW-0630">Potassium</keyword>
<keyword id="KW-1185">Reference proteome</keyword>
<keyword id="KW-0915">Sodium</keyword>
<keyword id="KW-0769">Symport</keyword>
<keyword id="KW-0812">Transmembrane</keyword>
<keyword id="KW-1133">Transmembrane helix</keyword>
<keyword id="KW-0813">Transport</keyword>
<protein>
    <recommendedName>
        <fullName>Excitatory amino acid transporter 4</fullName>
    </recommendedName>
    <alternativeName>
        <fullName>High-affinity neuronal glutamate transporter</fullName>
    </alternativeName>
    <alternativeName>
        <fullName>Sodium-dependent glutamate/aspartate transporter</fullName>
    </alternativeName>
    <alternativeName>
        <fullName>Solute carrier family 1 member 6</fullName>
    </alternativeName>
</protein>
<accession>O35544</accession>
<organism>
    <name type="scientific">Mus musculus</name>
    <name type="common">Mouse</name>
    <dbReference type="NCBI Taxonomy" id="10090"/>
    <lineage>
        <taxon>Eukaryota</taxon>
        <taxon>Metazoa</taxon>
        <taxon>Chordata</taxon>
        <taxon>Craniata</taxon>
        <taxon>Vertebrata</taxon>
        <taxon>Euteleostomi</taxon>
        <taxon>Mammalia</taxon>
        <taxon>Eutheria</taxon>
        <taxon>Euarchontoglires</taxon>
        <taxon>Glires</taxon>
        <taxon>Rodentia</taxon>
        <taxon>Myomorpha</taxon>
        <taxon>Muroidea</taxon>
        <taxon>Muridae</taxon>
        <taxon>Murinae</taxon>
        <taxon>Mus</taxon>
        <taxon>Mus</taxon>
    </lineage>
</organism>
<name>EAA4_MOUSE</name>
<dbReference type="EMBL" id="D83262">
    <property type="protein sequence ID" value="BAA23640.1"/>
    <property type="molecule type" value="mRNA"/>
</dbReference>
<dbReference type="CCDS" id="CCDS23970.1"/>
<dbReference type="RefSeq" id="NP_033226.1">
    <property type="nucleotide sequence ID" value="NM_009200.4"/>
</dbReference>
<dbReference type="SMR" id="O35544"/>
<dbReference type="BioGRID" id="203292">
    <property type="interactions" value="1"/>
</dbReference>
<dbReference type="FunCoup" id="O35544">
    <property type="interactions" value="159"/>
</dbReference>
<dbReference type="STRING" id="10090.ENSMUSP00000005490"/>
<dbReference type="GlyCosmos" id="O35544">
    <property type="glycosylation" value="3 sites, No reported glycans"/>
</dbReference>
<dbReference type="GlyGen" id="O35544">
    <property type="glycosylation" value="3 sites"/>
</dbReference>
<dbReference type="iPTMnet" id="O35544"/>
<dbReference type="PhosphoSitePlus" id="O35544"/>
<dbReference type="SwissPalm" id="O35544"/>
<dbReference type="PaxDb" id="10090-ENSMUSP00000005490"/>
<dbReference type="ProteomicsDB" id="275426"/>
<dbReference type="Antibodypedia" id="26923">
    <property type="antibodies" value="182 antibodies from 25 providers"/>
</dbReference>
<dbReference type="DNASU" id="20513"/>
<dbReference type="Ensembl" id="ENSMUST00000005490.10">
    <property type="protein sequence ID" value="ENSMUSP00000005490.9"/>
    <property type="gene ID" value="ENSMUSG00000005357.10"/>
</dbReference>
<dbReference type="GeneID" id="20513"/>
<dbReference type="KEGG" id="mmu:20513"/>
<dbReference type="UCSC" id="uc007fyg.2">
    <property type="organism name" value="mouse"/>
</dbReference>
<dbReference type="AGR" id="MGI:1096331"/>
<dbReference type="CTD" id="6511"/>
<dbReference type="MGI" id="MGI:1096331">
    <property type="gene designation" value="Slc1a6"/>
</dbReference>
<dbReference type="VEuPathDB" id="HostDB:ENSMUSG00000005357"/>
<dbReference type="eggNOG" id="KOG3787">
    <property type="taxonomic scope" value="Eukaryota"/>
</dbReference>
<dbReference type="GeneTree" id="ENSGT00940000159972"/>
<dbReference type="HOGENOM" id="CLU_019375_3_2_1"/>
<dbReference type="InParanoid" id="O35544"/>
<dbReference type="OMA" id="VGDIFIH"/>
<dbReference type="OrthoDB" id="5877963at2759"/>
<dbReference type="PhylomeDB" id="O35544"/>
<dbReference type="TreeFam" id="TF315206"/>
<dbReference type="Reactome" id="R-MMU-210500">
    <property type="pathway name" value="Glutamate Neurotransmitter Release Cycle"/>
</dbReference>
<dbReference type="Reactome" id="R-MMU-425393">
    <property type="pathway name" value="Transport of inorganic cations/anions and amino acids/oligopeptides"/>
</dbReference>
<dbReference type="BioGRID-ORCS" id="20513">
    <property type="hits" value="2 hits in 75 CRISPR screens"/>
</dbReference>
<dbReference type="ChiTaRS" id="Slc1a6">
    <property type="organism name" value="mouse"/>
</dbReference>
<dbReference type="PRO" id="PR:O35544"/>
<dbReference type="Proteomes" id="UP000000589">
    <property type="component" value="Chromosome 10"/>
</dbReference>
<dbReference type="RNAct" id="O35544">
    <property type="molecule type" value="protein"/>
</dbReference>
<dbReference type="Bgee" id="ENSMUSG00000005357">
    <property type="expression patterns" value="Expressed in cerebellar vermis and 70 other cell types or tissues"/>
</dbReference>
<dbReference type="ExpressionAtlas" id="O35544">
    <property type="expression patterns" value="baseline and differential"/>
</dbReference>
<dbReference type="GO" id="GO:0098978">
    <property type="term" value="C:glutamatergic synapse"/>
    <property type="evidence" value="ECO:0000314"/>
    <property type="project" value="SynGO"/>
</dbReference>
<dbReference type="GO" id="GO:0005794">
    <property type="term" value="C:Golgi apparatus"/>
    <property type="evidence" value="ECO:0000314"/>
    <property type="project" value="MGI"/>
</dbReference>
<dbReference type="GO" id="GO:0045111">
    <property type="term" value="C:intermediate filament cytoskeleton"/>
    <property type="evidence" value="ECO:0007669"/>
    <property type="project" value="Ensembl"/>
</dbReference>
<dbReference type="GO" id="GO:0016020">
    <property type="term" value="C:membrane"/>
    <property type="evidence" value="ECO:0000314"/>
    <property type="project" value="MGI"/>
</dbReference>
<dbReference type="GO" id="GO:0005886">
    <property type="term" value="C:plasma membrane"/>
    <property type="evidence" value="ECO:0000250"/>
    <property type="project" value="UniProtKB"/>
</dbReference>
<dbReference type="GO" id="GO:0042734">
    <property type="term" value="C:presynaptic membrane"/>
    <property type="evidence" value="ECO:0000314"/>
    <property type="project" value="SynGO"/>
</dbReference>
<dbReference type="GO" id="GO:0015501">
    <property type="term" value="F:glutamate:sodium symporter activity"/>
    <property type="evidence" value="ECO:0000250"/>
    <property type="project" value="UniProtKB"/>
</dbReference>
<dbReference type="GO" id="GO:0005314">
    <property type="term" value="F:high-affinity L-glutamate transmembrane transporter activity"/>
    <property type="evidence" value="ECO:0000250"/>
    <property type="project" value="UniProtKB"/>
</dbReference>
<dbReference type="GO" id="GO:0015183">
    <property type="term" value="F:L-aspartate transmembrane transporter activity"/>
    <property type="evidence" value="ECO:0000250"/>
    <property type="project" value="UniProtKB"/>
</dbReference>
<dbReference type="GO" id="GO:0005313">
    <property type="term" value="F:L-glutamate transmembrane transporter activity"/>
    <property type="evidence" value="ECO:0000315"/>
    <property type="project" value="MGI"/>
</dbReference>
<dbReference type="GO" id="GO:0046872">
    <property type="term" value="F:metal ion binding"/>
    <property type="evidence" value="ECO:0007669"/>
    <property type="project" value="UniProtKB-KW"/>
</dbReference>
<dbReference type="GO" id="GO:0051649">
    <property type="term" value="P:establishment of localization in cell"/>
    <property type="evidence" value="ECO:0000315"/>
    <property type="project" value="MGI"/>
</dbReference>
<dbReference type="GO" id="GO:0140009">
    <property type="term" value="P:L-aspartate import across plasma membrane"/>
    <property type="evidence" value="ECO:0000250"/>
    <property type="project" value="UniProtKB"/>
</dbReference>
<dbReference type="GO" id="GO:0098712">
    <property type="term" value="P:L-glutamate import across plasma membrane"/>
    <property type="evidence" value="ECO:0000250"/>
    <property type="project" value="UniProtKB"/>
</dbReference>
<dbReference type="GO" id="GO:0015813">
    <property type="term" value="P:L-glutamate transmembrane transport"/>
    <property type="evidence" value="ECO:0000315"/>
    <property type="project" value="MGI"/>
</dbReference>
<dbReference type="GO" id="GO:0001504">
    <property type="term" value="P:neurotransmitter uptake"/>
    <property type="evidence" value="ECO:0007669"/>
    <property type="project" value="Ensembl"/>
</dbReference>
<dbReference type="GO" id="GO:0042391">
    <property type="term" value="P:regulation of membrane potential"/>
    <property type="evidence" value="ECO:0000315"/>
    <property type="project" value="MGI"/>
</dbReference>
<dbReference type="FunFam" id="1.10.3860.10:FF:000002">
    <property type="entry name" value="Amino acid transporter"/>
    <property type="match status" value="1"/>
</dbReference>
<dbReference type="Gene3D" id="1.10.3860.10">
    <property type="entry name" value="Sodium:dicarboxylate symporter"/>
    <property type="match status" value="1"/>
</dbReference>
<dbReference type="InterPro" id="IPR050746">
    <property type="entry name" value="DAACS"/>
</dbReference>
<dbReference type="InterPro" id="IPR001991">
    <property type="entry name" value="Na-dicarboxylate_symporter"/>
</dbReference>
<dbReference type="InterPro" id="IPR018107">
    <property type="entry name" value="Na-dicarboxylate_symporter_CS"/>
</dbReference>
<dbReference type="InterPro" id="IPR036458">
    <property type="entry name" value="Na:dicarbo_symporter_sf"/>
</dbReference>
<dbReference type="PANTHER" id="PTHR11958:SF67">
    <property type="entry name" value="EXCITATORY AMINO ACID TRANSPORTER 4"/>
    <property type="match status" value="1"/>
</dbReference>
<dbReference type="PANTHER" id="PTHR11958">
    <property type="entry name" value="SODIUM/DICARBOXYLATE SYMPORTER-RELATED"/>
    <property type="match status" value="1"/>
</dbReference>
<dbReference type="Pfam" id="PF00375">
    <property type="entry name" value="SDF"/>
    <property type="match status" value="1"/>
</dbReference>
<dbReference type="PRINTS" id="PR00173">
    <property type="entry name" value="EDTRNSPORT"/>
</dbReference>
<dbReference type="SUPFAM" id="SSF118215">
    <property type="entry name" value="Proton glutamate symport protein"/>
    <property type="match status" value="1"/>
</dbReference>
<dbReference type="PROSITE" id="PS00713">
    <property type="entry name" value="NA_DICARBOXYL_SYMP_1"/>
    <property type="match status" value="1"/>
</dbReference>
<dbReference type="PROSITE" id="PS00714">
    <property type="entry name" value="NA_DICARBOXYL_SYMP_2"/>
    <property type="match status" value="1"/>
</dbReference>
<proteinExistence type="evidence at protein level"/>
<comment type="function">
    <text evidence="1 6 7">Sodium-dependent, high-affinity amino acid transporter that mediates the uptake of L-glutamate and also L-aspartate and D-aspartate (PubMed:9379843). Functions as a symporter that transports one amino acid molecule together with two or three Na(+) ions and one proton, in parallel with the counter-transport of one K(+) ion. Mediates Cl(-) flux that is not coupled to amino acid transport; this avoids the accumulation of negative charges due to aspartate and Na(+) symport (By similarity). Plays a redundant role in the rapid removal of released glutamate from the synaptic cleft, which is essential for terminating the postsynaptic action of glutamate (Probable).</text>
</comment>
<comment type="catalytic activity">
    <reaction evidence="4">
        <text>K(+)(in) + L-glutamate(out) + 3 Na(+)(out) + H(+)(out) = K(+)(out) + L-glutamate(in) + 3 Na(+)(in) + H(+)(in)</text>
        <dbReference type="Rhea" id="RHEA:70699"/>
        <dbReference type="ChEBI" id="CHEBI:15378"/>
        <dbReference type="ChEBI" id="CHEBI:29101"/>
        <dbReference type="ChEBI" id="CHEBI:29103"/>
        <dbReference type="ChEBI" id="CHEBI:29985"/>
    </reaction>
</comment>
<comment type="catalytic activity">
    <reaction evidence="4">
        <text>K(+)(in) + L-aspartate(out) + 3 Na(+)(out) + H(+)(out) = K(+)(out) + L-aspartate(in) + 3 Na(+)(in) + H(+)(in)</text>
        <dbReference type="Rhea" id="RHEA:70851"/>
        <dbReference type="ChEBI" id="CHEBI:15378"/>
        <dbReference type="ChEBI" id="CHEBI:29101"/>
        <dbReference type="ChEBI" id="CHEBI:29103"/>
        <dbReference type="ChEBI" id="CHEBI:29991"/>
    </reaction>
</comment>
<comment type="catalytic activity">
    <reaction evidence="4">
        <text>D-aspartate(out) + K(+)(in) + 3 Na(+)(out) + H(+)(out) = D-aspartate(in) + K(+)(out) + 3 Na(+)(in) + H(+)(in)</text>
        <dbReference type="Rhea" id="RHEA:71379"/>
        <dbReference type="ChEBI" id="CHEBI:15378"/>
        <dbReference type="ChEBI" id="CHEBI:29101"/>
        <dbReference type="ChEBI" id="CHEBI:29103"/>
        <dbReference type="ChEBI" id="CHEBI:29990"/>
    </reaction>
</comment>
<comment type="biophysicochemical properties">
    <kinetics>
        <KM evidence="6">40 uM for L-glutamate</KM>
    </kinetics>
</comment>
<comment type="subunit">
    <text evidence="7">Homotrimer.</text>
</comment>
<comment type="subcellular location">
    <subcellularLocation>
        <location evidence="6">Cell membrane</location>
        <topology evidence="7">Multi-pass membrane protein</topology>
    </subcellularLocation>
</comment>
<comment type="tissue specificity">
    <text evidence="6">Brain specific.</text>
</comment>
<comment type="domain">
    <text evidence="3">Contains eight transmembrane regions plus two helical hairpins that dip into the membrane. These helical hairpin structures play an important role in the transport process. The first enters the membrane from the cytoplasmic side, the second one from the extracellular side. During the transport cycle, the regions involved in amino acid transport, and especially the helical hairpins, move vertically by about 15-18 Angstroms, alternating between exposure to the aqueous phase and reinsertion in the lipid bilayer. In contrast, the regions involved in trimerization do not move.</text>
</comment>
<comment type="similarity">
    <text evidence="7">Belongs to the dicarboxylate/amino acid:cation symporter (DAACS) (TC 2.A.23) family. SLC1A6 subfamily.</text>
</comment>
<gene>
    <name type="primary">Slc1a6</name>
    <name type="synonym">Eaat4</name>
</gene>
<reference key="1">
    <citation type="journal article" date="1997" name="Brain Res. Mol. Brain Res.">
        <title>Structure and functional expression of the cloned mouse neuronal high-affinity glutamate transporter.</title>
        <authorList>
            <person name="Maeno-Hikichi Y."/>
            <person name="Tanaka K."/>
            <person name="Shibata T."/>
            <person name="Watanabe M."/>
            <person name="Inoue Y."/>
            <person name="Mukainaka Y."/>
            <person name="Wada K."/>
        </authorList>
    </citation>
    <scope>NUCLEOTIDE SEQUENCE [MRNA]</scope>
    <scope>FUNCTION</scope>
    <scope>SUBCELLULAR LOCATION</scope>
    <scope>BIOPHYSICOCHEMICAL PROPERTIES</scope>
    <scope>TISSUE SPECIFICITY</scope>
    <source>
        <strain>BALB/cJ</strain>
        <tissue>Cerebellum</tissue>
    </source>
</reference>
<reference key="2">
    <citation type="journal article" date="2010" name="Cell">
        <title>A tissue-specific atlas of mouse protein phosphorylation and expression.</title>
        <authorList>
            <person name="Huttlin E.L."/>
            <person name="Jedrychowski M.P."/>
            <person name="Elias J.E."/>
            <person name="Goswami T."/>
            <person name="Rad R."/>
            <person name="Beausoleil S.A."/>
            <person name="Villen J."/>
            <person name="Haas W."/>
            <person name="Sowa M.E."/>
            <person name="Gygi S.P."/>
        </authorList>
    </citation>
    <scope>IDENTIFICATION BY MASS SPECTROMETRY [LARGE SCALE ANALYSIS]</scope>
    <source>
        <tissue>Brain</tissue>
    </source>
</reference>
<sequence>MSSHGNSLFLRESGAGGGCLQGLQDSLQQRALRTRLRLQTMTREHVRRFLRRNAFILLTVSAVIIGVSLAFALRPYQLSYRQIKYFSFPGELLMRMLQMLVLPLIVSSLVTGMASLDNKATGRMGMRAAVYYMVTTVIAVFIGILMVTIIHPGKGSKEGLHREGRIETVPTADAFMDLVRNMFPPNLVEACFKQFKTQYSTRVVTRTIVRTDNGSELGASMSPTSSVENETSILENVTRALGTLQEVISFEETVPVPGSANGINALGLVVFSVAFGLVIGGMKHKGRVLRDFFDSLNEAIMRLVGIIIWYAPVGILFLIAGKILEMEDMAVLGGQLGMYTLTVIVGLFLHAGGVLPLIYFLVTHRNPFPFIGGMLQALITAMGTSSSSATLPITFRCLEEGLGVDRRITRFVLPVGATVNMDGTALYEALAAIFIAQVNNYELNLGQITTISITATAASVGAAGIPQAGLVTMVIVLTSVGLPTEDITLIIAVDWFLDRLRTMTNVLGDSIGAAVIEHLSQRELELQEAELTLPSLGKPYKSLMAQEKGASRGRGGNESVM</sequence>
<feature type="chain" id="PRO_0000202071" description="Excitatory amino acid transporter 4">
    <location>
        <begin position="1"/>
        <end position="561"/>
    </location>
</feature>
<feature type="topological domain" description="Cytoplasmic" evidence="5">
    <location>
        <begin position="1"/>
        <end position="52"/>
    </location>
</feature>
<feature type="transmembrane region" description="Helical" evidence="5">
    <location>
        <begin position="53"/>
        <end position="73"/>
    </location>
</feature>
<feature type="transmembrane region" description="Helical" evidence="5">
    <location>
        <begin position="96"/>
        <end position="116"/>
    </location>
</feature>
<feature type="transmembrane region" description="Helical" evidence="5">
    <location>
        <begin position="130"/>
        <end position="150"/>
    </location>
</feature>
<feature type="transmembrane region" description="Helical; Name=4" evidence="3">
    <location>
        <begin position="259"/>
        <end position="282"/>
    </location>
</feature>
<feature type="transmembrane region" description="Helical; Name=5" evidence="3">
    <location>
        <begin position="292"/>
        <end position="319"/>
    </location>
</feature>
<feature type="transmembrane region" description="Helical; Name=6" evidence="3">
    <location>
        <begin position="341"/>
        <end position="362"/>
    </location>
</feature>
<feature type="intramembrane region" description="Discontinuously helical" evidence="3">
    <location>
        <begin position="368"/>
        <end position="398"/>
    </location>
</feature>
<feature type="transmembrane region" description="Helical; Name=7" evidence="3">
    <location>
        <begin position="408"/>
        <end position="434"/>
    </location>
</feature>
<feature type="intramembrane region" description="Discontinuously helical" evidence="3">
    <location>
        <begin position="448"/>
        <end position="481"/>
    </location>
</feature>
<feature type="transmembrane region" description="Helical; Name=8" evidence="3">
    <location>
        <begin position="495"/>
        <end position="516"/>
    </location>
</feature>
<feature type="binding site" evidence="3">
    <location>
        <begin position="385"/>
        <end position="387"/>
    </location>
    <ligand>
        <name>L-aspartate</name>
        <dbReference type="ChEBI" id="CHEBI:29991"/>
    </ligand>
</feature>
<feature type="binding site" evidence="2">
    <location>
        <position position="416"/>
    </location>
    <ligand>
        <name>Na(+)</name>
        <dbReference type="ChEBI" id="CHEBI:29101"/>
        <label>1</label>
    </ligand>
</feature>
<feature type="binding site" evidence="3">
    <location>
        <position position="418"/>
    </location>
    <ligand>
        <name>Na(+)</name>
        <dbReference type="ChEBI" id="CHEBI:29101"/>
        <label>2</label>
    </ligand>
</feature>
<feature type="binding site" evidence="2">
    <location>
        <position position="420"/>
    </location>
    <ligand>
        <name>Na(+)</name>
        <dbReference type="ChEBI" id="CHEBI:29101"/>
        <label>1</label>
    </ligand>
</feature>
<feature type="binding site" evidence="3">
    <location>
        <position position="424"/>
    </location>
    <ligand>
        <name>L-aspartate</name>
        <dbReference type="ChEBI" id="CHEBI:29991"/>
    </ligand>
</feature>
<feature type="binding site" evidence="3">
    <location>
        <begin position="465"/>
        <end position="469"/>
    </location>
    <ligand>
        <name>L-aspartate</name>
        <dbReference type="ChEBI" id="CHEBI:29991"/>
    </ligand>
</feature>
<feature type="binding site" evidence="3">
    <location>
        <position position="498"/>
    </location>
    <ligand>
        <name>L-aspartate</name>
        <dbReference type="ChEBI" id="CHEBI:29991"/>
    </ligand>
</feature>
<feature type="binding site" evidence="3">
    <location>
        <position position="505"/>
    </location>
    <ligand>
        <name>L-aspartate</name>
        <dbReference type="ChEBI" id="CHEBI:29991"/>
    </ligand>
</feature>
<feature type="binding site" evidence="2">
    <location>
        <position position="505"/>
    </location>
    <ligand>
        <name>Na(+)</name>
        <dbReference type="ChEBI" id="CHEBI:29101"/>
        <label>1</label>
    </ligand>
</feature>
<feature type="binding site" evidence="2">
    <location>
        <position position="509"/>
    </location>
    <ligand>
        <name>Na(+)</name>
        <dbReference type="ChEBI" id="CHEBI:29101"/>
        <label>1</label>
    </ligand>
</feature>
<feature type="modified residue" description="Phosphoserine" evidence="1">
    <location>
        <position position="2"/>
    </location>
</feature>
<feature type="glycosylation site" description="N-linked (GlcNAc...) asparagine" evidence="5">
    <location>
        <position position="213"/>
    </location>
</feature>
<feature type="glycosylation site" description="N-linked (GlcNAc...) asparagine" evidence="5">
    <location>
        <position position="229"/>
    </location>
</feature>
<feature type="glycosylation site" description="N-linked (GlcNAc...) asparagine" evidence="5">
    <location>
        <position position="236"/>
    </location>
</feature>
<evidence type="ECO:0000250" key="1">
    <source>
        <dbReference type="UniProtKB" id="O35921"/>
    </source>
</evidence>
<evidence type="ECO:0000250" key="2">
    <source>
        <dbReference type="UniProtKB" id="O59010"/>
    </source>
</evidence>
<evidence type="ECO:0000250" key="3">
    <source>
        <dbReference type="UniProtKB" id="P43003"/>
    </source>
</evidence>
<evidence type="ECO:0000250" key="4">
    <source>
        <dbReference type="UniProtKB" id="P48664"/>
    </source>
</evidence>
<evidence type="ECO:0000255" key="5"/>
<evidence type="ECO:0000269" key="6">
    <source>
    </source>
</evidence>
<evidence type="ECO:0000305" key="7"/>